<gene>
    <name type="ORF">PITG_07555</name>
</gene>
<evidence type="ECO:0000255" key="1"/>
<evidence type="ECO:0000269" key="2">
    <source>
    </source>
</evidence>
<evidence type="ECO:0000269" key="3">
    <source>
    </source>
</evidence>
<evidence type="ECO:0000269" key="4">
    <source>
    </source>
</evidence>
<evidence type="ECO:0000269" key="5">
    <source>
    </source>
</evidence>
<evidence type="ECO:0000303" key="6">
    <source>
    </source>
</evidence>
<evidence type="ECO:0000305" key="7"/>
<evidence type="ECO:0000305" key="8">
    <source>
    </source>
</evidence>
<dbReference type="EMBL" id="DS028128">
    <property type="protein sequence ID" value="EEY53910.1"/>
    <property type="molecule type" value="Genomic_DNA"/>
</dbReference>
<dbReference type="RefSeq" id="XP_002904541.1">
    <property type="nucleotide sequence ID" value="XM_002904495.1"/>
</dbReference>
<dbReference type="EnsemblProtists" id="PITG_07555T0">
    <property type="protein sequence ID" value="PITG_07555T0"/>
    <property type="gene ID" value="PITG_07555"/>
</dbReference>
<dbReference type="GeneID" id="9465753"/>
<dbReference type="KEGG" id="pif:PITG_07555"/>
<dbReference type="VEuPathDB" id="FungiDB:PITG_07555"/>
<dbReference type="eggNOG" id="ENOG502RGM5">
    <property type="taxonomic scope" value="Eukaryota"/>
</dbReference>
<dbReference type="HOGENOM" id="CLU_1528152_0_0_1"/>
<dbReference type="InParanoid" id="D0N8M5"/>
<dbReference type="OMA" id="LEGWNSK"/>
<dbReference type="OrthoDB" id="125047at2759"/>
<dbReference type="Proteomes" id="UP000006643">
    <property type="component" value="Partially assembled WGS sequence"/>
</dbReference>
<dbReference type="GO" id="GO:0005576">
    <property type="term" value="C:extracellular region"/>
    <property type="evidence" value="ECO:0007669"/>
    <property type="project" value="UniProtKB-SubCell"/>
</dbReference>
<dbReference type="GO" id="GO:0030430">
    <property type="term" value="C:host cell cytoplasm"/>
    <property type="evidence" value="ECO:0007669"/>
    <property type="project" value="UniProtKB-SubCell"/>
</dbReference>
<dbReference type="GO" id="GO:0042025">
    <property type="term" value="C:host cell nucleus"/>
    <property type="evidence" value="ECO:0007669"/>
    <property type="project" value="UniProtKB-SubCell"/>
</dbReference>
<reference key="1">
    <citation type="journal article" date="2009" name="Nature">
        <title>Genome sequence and analysis of the Irish potato famine pathogen Phytophthora infestans.</title>
        <authorList>
            <consortium name="The Broad Institute Genome Sequencing Platform"/>
            <person name="Haas B.J."/>
            <person name="Kamoun S."/>
            <person name="Zody M.C."/>
            <person name="Jiang R.H."/>
            <person name="Handsaker R.E."/>
            <person name="Cano L.M."/>
            <person name="Grabherr M."/>
            <person name="Kodira C.D."/>
            <person name="Raffaele S."/>
            <person name="Torto-Alalibo T."/>
            <person name="Bozkurt T.O."/>
            <person name="Ah-Fong A.M."/>
            <person name="Alvarado L."/>
            <person name="Anderson V.L."/>
            <person name="Armstrong M.R."/>
            <person name="Avrova A."/>
            <person name="Baxter L."/>
            <person name="Beynon J."/>
            <person name="Boevink P.C."/>
            <person name="Bollmann S.R."/>
            <person name="Bos J.I."/>
            <person name="Bulone V."/>
            <person name="Cai G."/>
            <person name="Cakir C."/>
            <person name="Carrington J.C."/>
            <person name="Chawner M."/>
            <person name="Conti L."/>
            <person name="Costanzo S."/>
            <person name="Ewan R."/>
            <person name="Fahlgren N."/>
            <person name="Fischbach M.A."/>
            <person name="Fugelstad J."/>
            <person name="Gilroy E.M."/>
            <person name="Gnerre S."/>
            <person name="Green P.J."/>
            <person name="Grenville-Briggs L.J."/>
            <person name="Griffith J."/>
            <person name="Grunwald N.J."/>
            <person name="Horn K."/>
            <person name="Horner N.R."/>
            <person name="Hu C.H."/>
            <person name="Huitema E."/>
            <person name="Jeong D.H."/>
            <person name="Jones A.M."/>
            <person name="Jones J.D."/>
            <person name="Jones R.W."/>
            <person name="Karlsson E.K."/>
            <person name="Kunjeti S.G."/>
            <person name="Lamour K."/>
            <person name="Liu Z."/>
            <person name="Ma L."/>
            <person name="Maclean D."/>
            <person name="Chibucos M.C."/>
            <person name="McDonald H."/>
            <person name="McWalters J."/>
            <person name="Meijer H.J."/>
            <person name="Morgan W."/>
            <person name="Morris P.F."/>
            <person name="Munro C.A."/>
            <person name="O'Neill K."/>
            <person name="Ospina-Giraldo M."/>
            <person name="Pinzon A."/>
            <person name="Pritchard L."/>
            <person name="Ramsahoye B."/>
            <person name="Ren Q."/>
            <person name="Restrepo S."/>
            <person name="Roy S."/>
            <person name="Sadanandom A."/>
            <person name="Savidor A."/>
            <person name="Schornack S."/>
            <person name="Schwartz D.C."/>
            <person name="Schumann U.D."/>
            <person name="Schwessinger B."/>
            <person name="Seyer L."/>
            <person name="Sharpe T."/>
            <person name="Silvar C."/>
            <person name="Song J."/>
            <person name="Studholme D.J."/>
            <person name="Sykes S."/>
            <person name="Thines M."/>
            <person name="van de Vondervoort P.J."/>
            <person name="Phuntumart V."/>
            <person name="Wawra S."/>
            <person name="Weide R."/>
            <person name="Win J."/>
            <person name="Young C."/>
            <person name="Zhou S."/>
            <person name="Fry W."/>
            <person name="Meyers B.C."/>
            <person name="van West P."/>
            <person name="Ristaino J."/>
            <person name="Govers F."/>
            <person name="Birch P.R."/>
            <person name="Whisson S.C."/>
            <person name="Judelson H.S."/>
            <person name="Nusbaum C."/>
        </authorList>
    </citation>
    <scope>NUCLEOTIDE SEQUENCE [LARGE SCALE GENOMIC DNA]</scope>
    <scope>INDUCTION</scope>
    <source>
        <strain>T30-4</strain>
    </source>
</reference>
<reference key="2">
    <citation type="journal article" date="2017" name="BMC Genomics">
        <title>RNA-seq of life stages of the oomycete Phytophthora infestans reveals dynamic changes in metabolic, signal transduction, and pathogenesis genes and a major role for calcium signaling in development.</title>
        <authorList>
            <person name="Ah-Fong A.M."/>
            <person name="Kim K.S."/>
            <person name="Judelson H.S."/>
        </authorList>
    </citation>
    <scope>INDUCTION</scope>
</reference>
<reference key="3">
    <citation type="journal article" date="2017" name="Front. Plant Sci.">
        <title>Conserved RXLR effector genes of Phytophthora infestans expressed at the early stage of potato infection are suppressive to host defense.</title>
        <authorList>
            <person name="Yin J."/>
            <person name="Gu B."/>
            <person name="Huang G."/>
            <person name="Tian Y."/>
            <person name="Quan J."/>
            <person name="Lindqvist-Kreuze H."/>
            <person name="Shan W."/>
        </authorList>
    </citation>
    <scope>INDUCTION</scope>
    <scope>DOMAIN</scope>
</reference>
<reference key="4">
    <citation type="journal article" date="2019" name="J. Exp. Bot.">
        <title>Phytophthora infestans RXLR effectors act in concert at diverse subcellular locations to enhance host colonization.</title>
        <authorList>
            <person name="Wang S."/>
            <person name="McLellan H."/>
            <person name="Bukharova T."/>
            <person name="He Q."/>
            <person name="Murphy F."/>
            <person name="Shi J."/>
            <person name="Sun S."/>
            <person name="van Weymers P."/>
            <person name="Ren Y."/>
            <person name="Thilliez G."/>
            <person name="Wang H."/>
            <person name="Chen X."/>
            <person name="Engelhardt S."/>
            <person name="Vleeshouwers V."/>
            <person name="Gilroy E.M."/>
            <person name="Whisson S.C."/>
            <person name="Hein I."/>
            <person name="Wang X."/>
            <person name="Tian Z."/>
            <person name="Birch P.R.J."/>
            <person name="Boevink P.C."/>
        </authorList>
    </citation>
    <scope>FUNCTION</scope>
    <scope>SUBCELLULAR LOCATION</scope>
</reference>
<keyword id="KW-1035">Host cytoplasm</keyword>
<keyword id="KW-1048">Host nucleus</keyword>
<keyword id="KW-1185">Reference proteome</keyword>
<keyword id="KW-0964">Secreted</keyword>
<keyword id="KW-0732">Signal</keyword>
<keyword id="KW-0843">Virulence</keyword>
<proteinExistence type="evidence at transcript level"/>
<name>RXLRG_PHYIT</name>
<protein>
    <recommendedName>
        <fullName evidence="6">RxLR effector protein PITG_07555</fullName>
    </recommendedName>
</protein>
<sequence length="170" mass="19382">MQAYHLLLVCMYISCSAYTNASTAEDPNPNTYAEFSRMSHAAKDNGESNRALRTHNPDREERMMSLASLENWHAKLMGKTFEQVNSMFNKGKFNPPKGTTVGQATDWTWSKTIAFFEQMKKDNTTPESLKETLNIAQKEATMSAKALRKDPDYLMYNAFKTFWDNKSPGV</sequence>
<feature type="signal peptide" evidence="1">
    <location>
        <begin position="1"/>
        <end position="17"/>
    </location>
</feature>
<feature type="chain" id="PRO_5003012391" description="RxLR effector protein PITG_07555">
    <location>
        <begin position="18"/>
        <end position="170"/>
    </location>
</feature>
<feature type="short sequence motif" description="RxLR-dEER" evidence="8">
    <location>
        <begin position="50"/>
        <end position="62"/>
    </location>
</feature>
<accession>D0N8M5</accession>
<comment type="function">
    <text evidence="5">Effector that enhances P.infestans colonization of Nicotiana benthamiana leaves.</text>
</comment>
<comment type="subcellular location">
    <subcellularLocation>
        <location evidence="5">Secreted</location>
    </subcellularLocation>
    <subcellularLocation>
        <location evidence="5">Host cytoplasm</location>
    </subcellularLocation>
    <subcellularLocation>
        <location evidence="5">Host nucleus</location>
    </subcellularLocation>
</comment>
<comment type="induction">
    <text evidence="2 3 4">Expression is induced during host plant infection.</text>
</comment>
<comment type="domain">
    <text evidence="8">The RxLR-dEER motif acts to carry the protein into the host cell cytoplasm through binding to cell surface phosphatidylinositol-3-phosphate.</text>
</comment>
<comment type="similarity">
    <text evidence="7">Belongs to the RxLR effector family.</text>
</comment>
<organism>
    <name type="scientific">Phytophthora infestans (strain T30-4)</name>
    <name type="common">Potato late blight agent</name>
    <dbReference type="NCBI Taxonomy" id="403677"/>
    <lineage>
        <taxon>Eukaryota</taxon>
        <taxon>Sar</taxon>
        <taxon>Stramenopiles</taxon>
        <taxon>Oomycota</taxon>
        <taxon>Peronosporales</taxon>
        <taxon>Peronosporaceae</taxon>
        <taxon>Phytophthora</taxon>
    </lineage>
</organism>